<feature type="chain" id="PRO_0000173308" description="Transposase for insertion sequence element IS231D">
    <location>
        <begin position="1"/>
        <end position="478"/>
    </location>
</feature>
<protein>
    <recommendedName>
        <fullName>Transposase for insertion sequence element IS231D</fullName>
    </recommendedName>
</protein>
<dbReference type="EMBL" id="X63383">
    <property type="protein sequence ID" value="CAA44989.1"/>
    <property type="molecule type" value="Genomic_DNA"/>
</dbReference>
<dbReference type="PIR" id="S25199">
    <property type="entry name" value="S25199"/>
</dbReference>
<dbReference type="GO" id="GO:0003677">
    <property type="term" value="F:DNA binding"/>
    <property type="evidence" value="ECO:0007669"/>
    <property type="project" value="UniProtKB-KW"/>
</dbReference>
<dbReference type="GO" id="GO:0004803">
    <property type="term" value="F:transposase activity"/>
    <property type="evidence" value="ECO:0007669"/>
    <property type="project" value="InterPro"/>
</dbReference>
<dbReference type="GO" id="GO:0006313">
    <property type="term" value="P:DNA transposition"/>
    <property type="evidence" value="ECO:0007669"/>
    <property type="project" value="InterPro"/>
</dbReference>
<dbReference type="InterPro" id="IPR012337">
    <property type="entry name" value="RNaseH-like_sf"/>
</dbReference>
<dbReference type="InterPro" id="IPR047952">
    <property type="entry name" value="Transpos_IS4"/>
</dbReference>
<dbReference type="InterPro" id="IPR002559">
    <property type="entry name" value="Transposase_11"/>
</dbReference>
<dbReference type="NCBIfam" id="NF033592">
    <property type="entry name" value="transpos_IS4_1"/>
    <property type="match status" value="1"/>
</dbReference>
<dbReference type="PANTHER" id="PTHR33258">
    <property type="entry name" value="TRANSPOSASE INSL FOR INSERTION SEQUENCE ELEMENT IS186A-RELATED"/>
    <property type="match status" value="1"/>
</dbReference>
<dbReference type="PANTHER" id="PTHR33258:SF1">
    <property type="entry name" value="TRANSPOSASE INSL FOR INSERTION SEQUENCE ELEMENT IS186A-RELATED"/>
    <property type="match status" value="1"/>
</dbReference>
<dbReference type="Pfam" id="PF01609">
    <property type="entry name" value="DDE_Tnp_1"/>
    <property type="match status" value="1"/>
</dbReference>
<dbReference type="SUPFAM" id="SSF53098">
    <property type="entry name" value="Ribonuclease H-like"/>
    <property type="match status" value="1"/>
</dbReference>
<keyword id="KW-0233">DNA recombination</keyword>
<keyword id="KW-0238">DNA-binding</keyword>
<keyword id="KW-0814">Transposable element</keyword>
<keyword id="KW-0815">Transposition</keyword>
<reference key="1">
    <citation type="journal article" date="1992" name="Mol. Microbiol.">
        <title>IS231D, E and F, three new insertion sequences in Bacillus thuringiensis: extension of the IS231 family.</title>
        <authorList>
            <person name="Rezsoehazy R."/>
            <person name="Hallet B."/>
            <person name="Delcour J."/>
        </authorList>
    </citation>
    <scope>NUCLEOTIDE SEQUENCE [GENOMIC DNA]</scope>
    <source>
        <strain>Serotype 2</strain>
    </source>
</reference>
<comment type="function">
    <text>Involved in the transposition of the insertion sequence.</text>
</comment>
<comment type="similarity">
    <text evidence="1">Belongs to the transposase 11 family.</text>
</comment>
<name>T231D_BACTF</name>
<proteinExistence type="inferred from homology"/>
<sequence length="478" mass="55879">MNLSIQDELQLFSEELYHHLTPSLLDKLAKELGFVKRKRKFSGNELATICIWVSQRTASNSLVRLCSQLHAATGTLMSPEGLNKRFDGKAVEFLKYIFSVLWKSKLCETSAISSATFMYFQRIRILDATIFQVPKHLAHAYPGSGGCAQTAGIKIQLEYDLHSGQFLNFQVGPGKNNDKTFGTECLVTLRPGDLCIRDLGYFSLEDLDQMDQRGVYYISRLKLNHTVYMKNPSPKYFRNGTVKKQPQYTQVDLEYLMNTLKPGQTYEIKEAYIGKDQKLFSRVVIYRLTEKQLQERRTKQSYTESKKGITYSKKSKRLTGINIYVTNTPWGIVPMEQIHDFYSLRWQIEIIFKTWKSLFQIHQWQNIKQERLECHVYGRLIAIFLCSSTMFKMRQLLLHKRKRELSEYKAIGMIQDHLFLLFQAIQKNIQAITKIFIRLFTLLKKNGRKSHRYEKKTVFDIMGVIYEYSGFKKQQKVA</sequence>
<accession>Q05501</accession>
<evidence type="ECO:0000305" key="1"/>
<organism>
    <name type="scientific">Bacillus thuringiensis subsp. finitimus</name>
    <dbReference type="NCBI Taxonomy" id="29337"/>
    <lineage>
        <taxon>Bacteria</taxon>
        <taxon>Bacillati</taxon>
        <taxon>Bacillota</taxon>
        <taxon>Bacilli</taxon>
        <taxon>Bacillales</taxon>
        <taxon>Bacillaceae</taxon>
        <taxon>Bacillus</taxon>
        <taxon>Bacillus cereus group</taxon>
    </lineage>
</organism>